<dbReference type="EMBL" id="AB169348">
    <property type="protein sequence ID" value="BAE01433.1"/>
    <property type="molecule type" value="mRNA"/>
</dbReference>
<dbReference type="RefSeq" id="NP_001270339.1">
    <property type="nucleotide sequence ID" value="NM_001283410.1"/>
</dbReference>
<dbReference type="SMR" id="Q4R642"/>
<dbReference type="STRING" id="9541.ENSMFAP00000020110"/>
<dbReference type="eggNOG" id="KOG0619">
    <property type="taxonomic scope" value="Eukaryota"/>
</dbReference>
<dbReference type="Proteomes" id="UP000233100">
    <property type="component" value="Unplaced"/>
</dbReference>
<dbReference type="GO" id="GO:0005737">
    <property type="term" value="C:cytoplasm"/>
    <property type="evidence" value="ECO:0007669"/>
    <property type="project" value="UniProtKB-KW"/>
</dbReference>
<dbReference type="GO" id="GO:0005856">
    <property type="term" value="C:cytoskeleton"/>
    <property type="evidence" value="ECO:0007669"/>
    <property type="project" value="UniProtKB-KW"/>
</dbReference>
<dbReference type="GO" id="GO:0036126">
    <property type="term" value="C:sperm flagellum"/>
    <property type="evidence" value="ECO:0000250"/>
    <property type="project" value="UniProtKB"/>
</dbReference>
<dbReference type="GO" id="GO:0030317">
    <property type="term" value="P:flagellated sperm motility"/>
    <property type="evidence" value="ECO:0000250"/>
    <property type="project" value="UniProtKB"/>
</dbReference>
<dbReference type="CDD" id="cd00116">
    <property type="entry name" value="LRR_RI"/>
    <property type="match status" value="1"/>
</dbReference>
<dbReference type="FunFam" id="3.80.10.10:FF:000321">
    <property type="entry name" value="T-complex-associated testis-expressed protein 1"/>
    <property type="match status" value="1"/>
</dbReference>
<dbReference type="FunFam" id="3.80.10.10:FF:000373">
    <property type="entry name" value="T-complex-associated testis-expressed protein 1"/>
    <property type="match status" value="1"/>
</dbReference>
<dbReference type="Gene3D" id="3.80.10.10">
    <property type="entry name" value="Ribonuclease Inhibitor"/>
    <property type="match status" value="2"/>
</dbReference>
<dbReference type="InterPro" id="IPR052410">
    <property type="entry name" value="DRC5"/>
</dbReference>
<dbReference type="InterPro" id="IPR001611">
    <property type="entry name" value="Leu-rich_rpt"/>
</dbReference>
<dbReference type="InterPro" id="IPR032675">
    <property type="entry name" value="LRR_dom_sf"/>
</dbReference>
<dbReference type="PANTHER" id="PTHR24107:SF27">
    <property type="entry name" value="DYNEIN REGULATORY COMPLEX SUBUNIT 5"/>
    <property type="match status" value="1"/>
</dbReference>
<dbReference type="PANTHER" id="PTHR24107">
    <property type="entry name" value="YNEIN REGULATORY COMPLEX SUBUNIT 5"/>
    <property type="match status" value="1"/>
</dbReference>
<dbReference type="Pfam" id="PF13516">
    <property type="entry name" value="LRR_6"/>
    <property type="match status" value="5"/>
</dbReference>
<dbReference type="SMART" id="SM00368">
    <property type="entry name" value="LRR_RI"/>
    <property type="match status" value="5"/>
</dbReference>
<dbReference type="SUPFAM" id="SSF52047">
    <property type="entry name" value="RNI-like"/>
    <property type="match status" value="1"/>
</dbReference>
<sequence>MQETVTTSALLDPSHSSVSTQDKSSTGGHTSSTGPQPSKPSITPVSAKSRNPHPGANFHRMRRIIAEDPEWSLAIVPLLTELCIQHIIRNFQNNPILKQMLPEHQQKVLNHLSPDLPLAVTSNLIDNENYWLRCCMQRWPVCHVAHHGGSWKRMFFERHLENLLKHFIPGTTDPAVILDLLPLCRNYVRRVHVDQFLPPVQIPAQLRPGDQSDSGSEGEMEEPTVDHYQLGDLVAGLSHLEELDLVYDVKDCGMNFEWNLFLFTYRDCHSLAAAIKACHTLKIFKLTRSKVDDDKARIIIRSLLDHPVLEELDLSHNLIGDRGARGAAKLLNHSRLRVLNLANNQVRAPGAQSLAHALAHNTNLISLNLRLNCIEDEGGQALAHALQTNKCLTTLHLGGNELSEPTATLLSQVLAINTTLTSINLSCNHIGLDGGKQLLEGMSDNKTLLEFDLRLSDVAQESEYLIGQALYANREAARQRALNPSHFMSTITANGPENSVG</sequence>
<name>DRC5_MACFA</name>
<protein>
    <recommendedName>
        <fullName evidence="1">Dynein regulatory complex subunit 5</fullName>
    </recommendedName>
    <alternativeName>
        <fullName>T-complex-associated testis-expressed protein 1</fullName>
        <shortName>Tcte-1</shortName>
    </alternativeName>
</protein>
<organism>
    <name type="scientific">Macaca fascicularis</name>
    <name type="common">Crab-eating macaque</name>
    <name type="synonym">Cynomolgus monkey</name>
    <dbReference type="NCBI Taxonomy" id="9541"/>
    <lineage>
        <taxon>Eukaryota</taxon>
        <taxon>Metazoa</taxon>
        <taxon>Chordata</taxon>
        <taxon>Craniata</taxon>
        <taxon>Vertebrata</taxon>
        <taxon>Euteleostomi</taxon>
        <taxon>Mammalia</taxon>
        <taxon>Eutheria</taxon>
        <taxon>Euarchontoglires</taxon>
        <taxon>Primates</taxon>
        <taxon>Haplorrhini</taxon>
        <taxon>Catarrhini</taxon>
        <taxon>Cercopithecidae</taxon>
        <taxon>Cercopithecinae</taxon>
        <taxon>Macaca</taxon>
    </lineage>
</organism>
<gene>
    <name type="primary">TCTE1</name>
    <name evidence="1" type="synonym">DRC5</name>
    <name type="ORF">QtsA-19176</name>
</gene>
<comment type="function">
    <text evidence="1 2">Component of the nexin-dynein regulatory complex (N-DRC) a key regulator of ciliary/flagellar motility which maintains the alignment and integrity of the distal axoneme and regulates microtubule sliding in motile axonemes. May play a role in the assembly of N-DRC. May be required for sperm motility.</text>
</comment>
<comment type="subunit">
    <text evidence="1 3">Component of the nexin-dynein regulatory complex (N-DRC). Interacts with DRC1. Interacts with FBXL13/DRC6, DRC3 and DRC7.</text>
</comment>
<comment type="subcellular location">
    <subcellularLocation>
        <location evidence="1">Cell projection</location>
        <location evidence="1">Cilium</location>
        <location evidence="1">Flagellum</location>
    </subcellularLocation>
    <subcellularLocation>
        <location evidence="2">Cytoplasm</location>
        <location evidence="2">Cytoskeleton</location>
        <location evidence="2">Flagellum axoneme</location>
    </subcellularLocation>
    <text evidence="1">Detected along the length of the sperm flagellum.</text>
</comment>
<comment type="similarity">
    <text evidence="5">Belongs to the DRC5 family.</text>
</comment>
<keyword id="KW-0966">Cell projection</keyword>
<keyword id="KW-0969">Cilium</keyword>
<keyword id="KW-0963">Cytoplasm</keyword>
<keyword id="KW-0206">Cytoskeleton</keyword>
<keyword id="KW-0282">Flagellum</keyword>
<keyword id="KW-0433">Leucine-rich repeat</keyword>
<keyword id="KW-1185">Reference proteome</keyword>
<keyword id="KW-0677">Repeat</keyword>
<proteinExistence type="evidence at transcript level"/>
<reference key="1">
    <citation type="submission" date="2005-06" db="EMBL/GenBank/DDBJ databases">
        <title>DNA sequences of macaque genes expressed in brain or testis and its evolutionary implications.</title>
        <authorList>
            <consortium name="International consortium for macaque cDNA sequencing and analysis"/>
        </authorList>
    </citation>
    <scope>NUCLEOTIDE SEQUENCE [LARGE SCALE MRNA]</scope>
    <source>
        <tissue>Testis</tissue>
    </source>
</reference>
<accession>Q4R642</accession>
<evidence type="ECO:0000250" key="1">
    <source>
        <dbReference type="UniProtKB" id="A6H639"/>
    </source>
</evidence>
<evidence type="ECO:0000250" key="2">
    <source>
        <dbReference type="UniProtKB" id="A8HMZ4"/>
    </source>
</evidence>
<evidence type="ECO:0000250" key="3">
    <source>
        <dbReference type="UniProtKB" id="Q5JU00"/>
    </source>
</evidence>
<evidence type="ECO:0000256" key="4">
    <source>
        <dbReference type="SAM" id="MobiDB-lite"/>
    </source>
</evidence>
<evidence type="ECO:0000305" key="5"/>
<feature type="chain" id="PRO_0000326526" description="Dynein regulatory complex subunit 5">
    <location>
        <begin position="1"/>
        <end position="501"/>
    </location>
</feature>
<feature type="repeat" description="LRR 1">
    <location>
        <begin position="308"/>
        <end position="321"/>
    </location>
</feature>
<feature type="repeat" description="LRR 2">
    <location>
        <begin position="335"/>
        <end position="355"/>
    </location>
</feature>
<feature type="repeat" description="LRR 3">
    <location>
        <begin position="363"/>
        <end position="383"/>
    </location>
</feature>
<feature type="repeat" description="LRR 4">
    <location>
        <begin position="391"/>
        <end position="411"/>
    </location>
</feature>
<feature type="repeat" description="LRR 5">
    <location>
        <begin position="419"/>
        <end position="439"/>
    </location>
</feature>
<feature type="region of interest" description="Disordered" evidence="4">
    <location>
        <begin position="1"/>
        <end position="56"/>
    </location>
</feature>
<feature type="region of interest" description="Disordered" evidence="4">
    <location>
        <begin position="203"/>
        <end position="222"/>
    </location>
</feature>
<feature type="compositionally biased region" description="Polar residues" evidence="4">
    <location>
        <begin position="1"/>
        <end position="23"/>
    </location>
</feature>
<feature type="compositionally biased region" description="Low complexity" evidence="4">
    <location>
        <begin position="24"/>
        <end position="34"/>
    </location>
</feature>
<feature type="compositionally biased region" description="Polar residues" evidence="4">
    <location>
        <begin position="35"/>
        <end position="49"/>
    </location>
</feature>